<dbReference type="EMBL" id="CP001600">
    <property type="protein sequence ID" value="ACR70254.1"/>
    <property type="molecule type" value="Genomic_DNA"/>
</dbReference>
<dbReference type="RefSeq" id="WP_015872342.1">
    <property type="nucleotide sequence ID" value="NZ_CP169062.1"/>
</dbReference>
<dbReference type="SMR" id="C5BAP7"/>
<dbReference type="STRING" id="67780.B6E78_07375"/>
<dbReference type="GeneID" id="69539973"/>
<dbReference type="KEGG" id="eic:NT01EI_3104"/>
<dbReference type="PATRIC" id="fig|634503.3.peg.2766"/>
<dbReference type="HOGENOM" id="CLU_069054_5_3_6"/>
<dbReference type="OrthoDB" id="9801228at2"/>
<dbReference type="Proteomes" id="UP000001485">
    <property type="component" value="Chromosome"/>
</dbReference>
<dbReference type="GO" id="GO:0005829">
    <property type="term" value="C:cytosol"/>
    <property type="evidence" value="ECO:0007669"/>
    <property type="project" value="TreeGrafter"/>
</dbReference>
<dbReference type="GO" id="GO:0051537">
    <property type="term" value="F:2 iron, 2 sulfur cluster binding"/>
    <property type="evidence" value="ECO:0007669"/>
    <property type="project" value="UniProtKB-ARBA"/>
</dbReference>
<dbReference type="GO" id="GO:0051539">
    <property type="term" value="F:4 iron, 4 sulfur cluster binding"/>
    <property type="evidence" value="ECO:0007669"/>
    <property type="project" value="TreeGrafter"/>
</dbReference>
<dbReference type="GO" id="GO:0005506">
    <property type="term" value="F:iron ion binding"/>
    <property type="evidence" value="ECO:0007669"/>
    <property type="project" value="UniProtKB-UniRule"/>
</dbReference>
<dbReference type="GO" id="GO:0016226">
    <property type="term" value="P:iron-sulfur cluster assembly"/>
    <property type="evidence" value="ECO:0007669"/>
    <property type="project" value="UniProtKB-UniRule"/>
</dbReference>
<dbReference type="FunFam" id="2.60.300.12:FF:000002">
    <property type="entry name" value="Iron-sulfur cluster insertion protein ErpA"/>
    <property type="match status" value="1"/>
</dbReference>
<dbReference type="Gene3D" id="2.60.300.12">
    <property type="entry name" value="HesB-like domain"/>
    <property type="match status" value="1"/>
</dbReference>
<dbReference type="HAMAP" id="MF_01380">
    <property type="entry name" value="Fe_S_insert_ErpA"/>
    <property type="match status" value="1"/>
</dbReference>
<dbReference type="InterPro" id="IPR000361">
    <property type="entry name" value="FeS_biogenesis"/>
</dbReference>
<dbReference type="InterPro" id="IPR016092">
    <property type="entry name" value="FeS_cluster_insertion"/>
</dbReference>
<dbReference type="InterPro" id="IPR017870">
    <property type="entry name" value="FeS_cluster_insertion_CS"/>
</dbReference>
<dbReference type="InterPro" id="IPR023063">
    <property type="entry name" value="FeS_cluster_insertion_RrpA"/>
</dbReference>
<dbReference type="InterPro" id="IPR035903">
    <property type="entry name" value="HesB-like_dom_sf"/>
</dbReference>
<dbReference type="NCBIfam" id="TIGR00049">
    <property type="entry name" value="iron-sulfur cluster assembly accessory protein"/>
    <property type="match status" value="1"/>
</dbReference>
<dbReference type="NCBIfam" id="NF010147">
    <property type="entry name" value="PRK13623.1"/>
    <property type="match status" value="1"/>
</dbReference>
<dbReference type="PANTHER" id="PTHR43011">
    <property type="entry name" value="IRON-SULFUR CLUSTER ASSEMBLY 2 HOMOLOG, MITOCHONDRIAL"/>
    <property type="match status" value="1"/>
</dbReference>
<dbReference type="PANTHER" id="PTHR43011:SF1">
    <property type="entry name" value="IRON-SULFUR CLUSTER ASSEMBLY 2 HOMOLOG, MITOCHONDRIAL"/>
    <property type="match status" value="1"/>
</dbReference>
<dbReference type="Pfam" id="PF01521">
    <property type="entry name" value="Fe-S_biosyn"/>
    <property type="match status" value="1"/>
</dbReference>
<dbReference type="SUPFAM" id="SSF89360">
    <property type="entry name" value="HesB-like domain"/>
    <property type="match status" value="1"/>
</dbReference>
<dbReference type="PROSITE" id="PS01152">
    <property type="entry name" value="HESB"/>
    <property type="match status" value="1"/>
</dbReference>
<comment type="function">
    <text evidence="1">Required for insertion of 4Fe-4S clusters for at least IspG.</text>
</comment>
<comment type="cofactor">
    <cofactor evidence="1">
        <name>iron-sulfur cluster</name>
        <dbReference type="ChEBI" id="CHEBI:30408"/>
    </cofactor>
    <text evidence="1">Binds 1 iron-sulfur cluster per subunit.</text>
</comment>
<comment type="subunit">
    <text evidence="1">Homodimer.</text>
</comment>
<comment type="similarity">
    <text evidence="1">Belongs to the HesB/IscA family.</text>
</comment>
<accession>C5BAP7</accession>
<organism>
    <name type="scientific">Edwardsiella ictaluri (strain 93-146)</name>
    <dbReference type="NCBI Taxonomy" id="634503"/>
    <lineage>
        <taxon>Bacteria</taxon>
        <taxon>Pseudomonadati</taxon>
        <taxon>Pseudomonadota</taxon>
        <taxon>Gammaproteobacteria</taxon>
        <taxon>Enterobacterales</taxon>
        <taxon>Hafniaceae</taxon>
        <taxon>Edwardsiella</taxon>
    </lineage>
</organism>
<feature type="chain" id="PRO_1000215094" description="Iron-sulfur cluster insertion protein ErpA">
    <location>
        <begin position="1"/>
        <end position="114"/>
    </location>
</feature>
<feature type="binding site" evidence="1">
    <location>
        <position position="42"/>
    </location>
    <ligand>
        <name>iron-sulfur cluster</name>
        <dbReference type="ChEBI" id="CHEBI:30408"/>
    </ligand>
</feature>
<feature type="binding site" evidence="1">
    <location>
        <position position="106"/>
    </location>
    <ligand>
        <name>iron-sulfur cluster</name>
        <dbReference type="ChEBI" id="CHEBI:30408"/>
    </ligand>
</feature>
<feature type="binding site" evidence="1">
    <location>
        <position position="108"/>
    </location>
    <ligand>
        <name>iron-sulfur cluster</name>
        <dbReference type="ChEBI" id="CHEBI:30408"/>
    </ligand>
</feature>
<gene>
    <name evidence="1" type="primary">erpA</name>
    <name type="ordered locus">NT01EI_3104</name>
</gene>
<protein>
    <recommendedName>
        <fullName evidence="1">Iron-sulfur cluster insertion protein ErpA</fullName>
    </recommendedName>
</protein>
<keyword id="KW-0408">Iron</keyword>
<keyword id="KW-0411">Iron-sulfur</keyword>
<keyword id="KW-0479">Metal-binding</keyword>
<proteinExistence type="inferred from homology"/>
<sequence>MSDEMAVPLQFTDAAANKVKSLIADEDNPNLKLRVYITGGGCSGFQYGFTFDDKVNDGDMTIEKLGVALVVDAMSLQYLVGGSVDYTEGLEGSRFIVNNPNAKTTCGCGSSFSI</sequence>
<evidence type="ECO:0000255" key="1">
    <source>
        <dbReference type="HAMAP-Rule" id="MF_01380"/>
    </source>
</evidence>
<name>ERPA_EDWI9</name>
<reference key="1">
    <citation type="submission" date="2009-03" db="EMBL/GenBank/DDBJ databases">
        <title>Complete genome sequence of Edwardsiella ictaluri 93-146.</title>
        <authorList>
            <person name="Williams M.L."/>
            <person name="Gillaspy A.F."/>
            <person name="Dyer D.W."/>
            <person name="Thune R.L."/>
            <person name="Waldbieser G.C."/>
            <person name="Schuster S.C."/>
            <person name="Gipson J."/>
            <person name="Zaitshik J."/>
            <person name="Landry C."/>
            <person name="Lawrence M.L."/>
        </authorList>
    </citation>
    <scope>NUCLEOTIDE SEQUENCE [LARGE SCALE GENOMIC DNA]</scope>
    <source>
        <strain>93-146</strain>
    </source>
</reference>